<accession>B7ITG3</accession>
<gene>
    <name evidence="1" type="primary">fosB</name>
    <name type="ordered locus">BCG9842_B3277</name>
</gene>
<feature type="chain" id="PRO_1000146146" description="Metallothiol transferase FosB">
    <location>
        <begin position="1"/>
        <end position="138"/>
    </location>
</feature>
<feature type="domain" description="VOC" evidence="2">
    <location>
        <begin position="4"/>
        <end position="119"/>
    </location>
</feature>
<feature type="active site" description="Proton donor/acceptor" evidence="2">
    <location>
        <position position="115"/>
    </location>
</feature>
<feature type="binding site" evidence="1">
    <location>
        <position position="7"/>
    </location>
    <ligand>
        <name>Mg(2+)</name>
        <dbReference type="ChEBI" id="CHEBI:18420"/>
    </ligand>
</feature>
<feature type="binding site" evidence="1">
    <location>
        <position position="66"/>
    </location>
    <ligand>
        <name>Mg(2+)</name>
        <dbReference type="ChEBI" id="CHEBI:18420"/>
    </ligand>
</feature>
<feature type="binding site" evidence="1">
    <location>
        <position position="115"/>
    </location>
    <ligand>
        <name>Mg(2+)</name>
        <dbReference type="ChEBI" id="CHEBI:18420"/>
    </ligand>
</feature>
<organism>
    <name type="scientific">Bacillus cereus (strain G9842)</name>
    <dbReference type="NCBI Taxonomy" id="405531"/>
    <lineage>
        <taxon>Bacteria</taxon>
        <taxon>Bacillati</taxon>
        <taxon>Bacillota</taxon>
        <taxon>Bacilli</taxon>
        <taxon>Bacillales</taxon>
        <taxon>Bacillaceae</taxon>
        <taxon>Bacillus</taxon>
        <taxon>Bacillus cereus group</taxon>
    </lineage>
</organism>
<comment type="function">
    <text evidence="1">Metallothiol transferase which confers resistance to fosfomycin by catalyzing the addition of a thiol cofactor to fosfomycin. L-cysteine is probably the physiological thiol donor.</text>
</comment>
<comment type="cofactor">
    <cofactor evidence="1">
        <name>Mg(2+)</name>
        <dbReference type="ChEBI" id="CHEBI:18420"/>
    </cofactor>
</comment>
<comment type="subunit">
    <text evidence="1">Homodimer.</text>
</comment>
<comment type="subcellular location">
    <subcellularLocation>
        <location evidence="1">Cytoplasm</location>
    </subcellularLocation>
</comment>
<comment type="similarity">
    <text evidence="1">Belongs to the fosfomycin resistance protein family. FosB subfamily.</text>
</comment>
<keyword id="KW-0046">Antibiotic resistance</keyword>
<keyword id="KW-0963">Cytoplasm</keyword>
<keyword id="KW-0460">Magnesium</keyword>
<keyword id="KW-0479">Metal-binding</keyword>
<keyword id="KW-0808">Transferase</keyword>
<reference key="1">
    <citation type="submission" date="2008-10" db="EMBL/GenBank/DDBJ databases">
        <title>Genome sequence of Bacillus cereus G9842.</title>
        <authorList>
            <person name="Dodson R.J."/>
            <person name="Durkin A.S."/>
            <person name="Rosovitz M.J."/>
            <person name="Rasko D.A."/>
            <person name="Hoffmaster A."/>
            <person name="Ravel J."/>
            <person name="Sutton G."/>
        </authorList>
    </citation>
    <scope>NUCLEOTIDE SEQUENCE [LARGE SCALE GENOMIC DNA]</scope>
    <source>
        <strain>G9842</strain>
    </source>
</reference>
<protein>
    <recommendedName>
        <fullName evidence="1">Metallothiol transferase FosB</fullName>
        <ecNumber evidence="1">2.5.1.-</ecNumber>
    </recommendedName>
    <alternativeName>
        <fullName evidence="1">Fosfomycin resistance protein</fullName>
    </alternativeName>
</protein>
<sequence length="138" mass="16535">MLRGINHICFSVSNLENSIMFYEKVLEGELLVKGRKLAYFNICGVWIALNEETHIPRNEIHQSYTHIAFSVEQEDFEYLIQRLEENDVHILKGRERDVRDCESIYFVDPDGHKFEFHSGTLQDRLNYYRDEKPHMTFY</sequence>
<name>FOSB_BACC2</name>
<evidence type="ECO:0000255" key="1">
    <source>
        <dbReference type="HAMAP-Rule" id="MF_01512"/>
    </source>
</evidence>
<evidence type="ECO:0000255" key="2">
    <source>
        <dbReference type="PROSITE-ProRule" id="PRU01163"/>
    </source>
</evidence>
<proteinExistence type="inferred from homology"/>
<dbReference type="EC" id="2.5.1.-" evidence="1"/>
<dbReference type="EMBL" id="CP001186">
    <property type="protein sequence ID" value="ACK97093.1"/>
    <property type="molecule type" value="Genomic_DNA"/>
</dbReference>
<dbReference type="RefSeq" id="WP_000943764.1">
    <property type="nucleotide sequence ID" value="NC_011772.1"/>
</dbReference>
<dbReference type="SMR" id="B7ITG3"/>
<dbReference type="KEGG" id="bcg:BCG9842_B3277"/>
<dbReference type="HOGENOM" id="CLU_121356_0_0_9"/>
<dbReference type="Proteomes" id="UP000006744">
    <property type="component" value="Chromosome"/>
</dbReference>
<dbReference type="GO" id="GO:0005737">
    <property type="term" value="C:cytoplasm"/>
    <property type="evidence" value="ECO:0007669"/>
    <property type="project" value="UniProtKB-SubCell"/>
</dbReference>
<dbReference type="GO" id="GO:0000287">
    <property type="term" value="F:magnesium ion binding"/>
    <property type="evidence" value="ECO:0007669"/>
    <property type="project" value="UniProtKB-UniRule"/>
</dbReference>
<dbReference type="GO" id="GO:0016765">
    <property type="term" value="F:transferase activity, transferring alkyl or aryl (other than methyl) groups"/>
    <property type="evidence" value="ECO:0007669"/>
    <property type="project" value="UniProtKB-UniRule"/>
</dbReference>
<dbReference type="GO" id="GO:0046677">
    <property type="term" value="P:response to antibiotic"/>
    <property type="evidence" value="ECO:0007669"/>
    <property type="project" value="UniProtKB-UniRule"/>
</dbReference>
<dbReference type="CDD" id="cd08363">
    <property type="entry name" value="FosB"/>
    <property type="match status" value="1"/>
</dbReference>
<dbReference type="FunFam" id="3.10.180.10:FF:000015">
    <property type="entry name" value="Metallothiol transferase FosB"/>
    <property type="match status" value="1"/>
</dbReference>
<dbReference type="Gene3D" id="3.10.180.10">
    <property type="entry name" value="2,3-Dihydroxybiphenyl 1,2-Dioxygenase, domain 1"/>
    <property type="match status" value="1"/>
</dbReference>
<dbReference type="HAMAP" id="MF_01512">
    <property type="entry name" value="FosB"/>
    <property type="match status" value="1"/>
</dbReference>
<dbReference type="InterPro" id="IPR051332">
    <property type="entry name" value="Fosfomycin_Res_Enzymes"/>
</dbReference>
<dbReference type="InterPro" id="IPR029068">
    <property type="entry name" value="Glyas_Bleomycin-R_OHBP_Dase"/>
</dbReference>
<dbReference type="InterPro" id="IPR004360">
    <property type="entry name" value="Glyas_Fos-R_dOase_dom"/>
</dbReference>
<dbReference type="InterPro" id="IPR022858">
    <property type="entry name" value="Metallothiol_Trafse_FosB"/>
</dbReference>
<dbReference type="InterPro" id="IPR037523">
    <property type="entry name" value="VOC"/>
</dbReference>
<dbReference type="NCBIfam" id="NF000493">
    <property type="entry name" value="Fos_BSH"/>
    <property type="match status" value="1"/>
</dbReference>
<dbReference type="NCBIfam" id="NF041541">
    <property type="entry name" value="fosBx1_fam"/>
    <property type="match status" value="1"/>
</dbReference>
<dbReference type="NCBIfam" id="NF003152">
    <property type="entry name" value="PRK04101.1"/>
    <property type="match status" value="1"/>
</dbReference>
<dbReference type="PANTHER" id="PTHR36113:SF6">
    <property type="entry name" value="FOSFOMYCIN RESISTANCE PROTEIN FOSX"/>
    <property type="match status" value="1"/>
</dbReference>
<dbReference type="PANTHER" id="PTHR36113">
    <property type="entry name" value="LYASE, PUTATIVE-RELATED-RELATED"/>
    <property type="match status" value="1"/>
</dbReference>
<dbReference type="Pfam" id="PF00903">
    <property type="entry name" value="Glyoxalase"/>
    <property type="match status" value="1"/>
</dbReference>
<dbReference type="SUPFAM" id="SSF54593">
    <property type="entry name" value="Glyoxalase/Bleomycin resistance protein/Dihydroxybiphenyl dioxygenase"/>
    <property type="match status" value="1"/>
</dbReference>
<dbReference type="PROSITE" id="PS51819">
    <property type="entry name" value="VOC"/>
    <property type="match status" value="1"/>
</dbReference>